<feature type="chain" id="PRO_0000367642" description="Glutamate--tRNA ligase 1">
    <location>
        <begin position="1"/>
        <end position="431"/>
    </location>
</feature>
<feature type="short sequence motif" description="'HIGH' region" evidence="1">
    <location>
        <begin position="6"/>
        <end position="16"/>
    </location>
</feature>
<feature type="short sequence motif" description="'KMSKS' region" evidence="1">
    <location>
        <begin position="235"/>
        <end position="239"/>
    </location>
</feature>
<feature type="binding site" evidence="1">
    <location>
        <position position="238"/>
    </location>
    <ligand>
        <name>ATP</name>
        <dbReference type="ChEBI" id="CHEBI:30616"/>
    </ligand>
</feature>
<accession>A8FLQ4</accession>
<gene>
    <name evidence="1" type="primary">gltX1</name>
    <name type="ordered locus">C8J_0792</name>
</gene>
<comment type="function">
    <text evidence="1">Catalyzes the attachment of glutamate to tRNA(Glu) in a two-step reaction: glutamate is first activated by ATP to form Glu-AMP and then transferred to the acceptor end of tRNA(Glu).</text>
</comment>
<comment type="catalytic activity">
    <reaction evidence="1">
        <text>tRNA(Glu) + L-glutamate + ATP = L-glutamyl-tRNA(Glu) + AMP + diphosphate</text>
        <dbReference type="Rhea" id="RHEA:23540"/>
        <dbReference type="Rhea" id="RHEA-COMP:9663"/>
        <dbReference type="Rhea" id="RHEA-COMP:9680"/>
        <dbReference type="ChEBI" id="CHEBI:29985"/>
        <dbReference type="ChEBI" id="CHEBI:30616"/>
        <dbReference type="ChEBI" id="CHEBI:33019"/>
        <dbReference type="ChEBI" id="CHEBI:78442"/>
        <dbReference type="ChEBI" id="CHEBI:78520"/>
        <dbReference type="ChEBI" id="CHEBI:456215"/>
        <dbReference type="EC" id="6.1.1.17"/>
    </reaction>
</comment>
<comment type="subunit">
    <text evidence="1">Monomer.</text>
</comment>
<comment type="subcellular location">
    <subcellularLocation>
        <location evidence="1">Cytoplasm</location>
    </subcellularLocation>
</comment>
<comment type="similarity">
    <text evidence="1">Belongs to the class-I aminoacyl-tRNA synthetase family. Glutamate--tRNA ligase type 1 subfamily.</text>
</comment>
<sequence length="431" mass="50087">MYRFAPSPTGDMHIGNLRAAIFNYICARQKNMDFILRIEDTDKARNIAGKEEEIKEILNLFGISWQHYYIQSENLKFHRQMALKLISEKKAFACFCTEEELEAKKELAKKQGKAYRYDGTCEKLADIDVLECEKPFVIRLKKPTHTMKFTDFIKGELSFEPENIDSFVIMRTDKTPTYNFACAVDDMLENVTCIIRGEDHVSNTPKQEHIRASLGYNKAMTYAHLPIILNEEGVKMSKREAHSSVKWLLESGILPSAIANYLIMLGNKTPCEIFTLEEAIKWFDISKVSKAPARFDLKKLLQINREHIKMIKDDELNKILDLNKDLAQLAKFYTQEASTIKELKEKMRAIFNTKDFGEFETECKILKELLKDIELFENYEDFKNELLSKSDLKGKKFFMPLRIILTGNIHGPELGDLYPYIKNFIHELARI</sequence>
<organism>
    <name type="scientific">Campylobacter jejuni subsp. jejuni serotype O:6 (strain 81116 / NCTC 11828)</name>
    <dbReference type="NCBI Taxonomy" id="407148"/>
    <lineage>
        <taxon>Bacteria</taxon>
        <taxon>Pseudomonadati</taxon>
        <taxon>Campylobacterota</taxon>
        <taxon>Epsilonproteobacteria</taxon>
        <taxon>Campylobacterales</taxon>
        <taxon>Campylobacteraceae</taxon>
        <taxon>Campylobacter</taxon>
    </lineage>
</organism>
<evidence type="ECO:0000255" key="1">
    <source>
        <dbReference type="HAMAP-Rule" id="MF_00022"/>
    </source>
</evidence>
<name>SYE1_CAMJ8</name>
<dbReference type="EC" id="6.1.1.17" evidence="1"/>
<dbReference type="EMBL" id="CP000814">
    <property type="protein sequence ID" value="ABV52391.1"/>
    <property type="molecule type" value="Genomic_DNA"/>
</dbReference>
<dbReference type="SMR" id="A8FLQ4"/>
<dbReference type="KEGG" id="cju:C8J_0792"/>
<dbReference type="HOGENOM" id="CLU_015768_6_0_7"/>
<dbReference type="GO" id="GO:0005829">
    <property type="term" value="C:cytosol"/>
    <property type="evidence" value="ECO:0007669"/>
    <property type="project" value="TreeGrafter"/>
</dbReference>
<dbReference type="GO" id="GO:0005524">
    <property type="term" value="F:ATP binding"/>
    <property type="evidence" value="ECO:0007669"/>
    <property type="project" value="UniProtKB-UniRule"/>
</dbReference>
<dbReference type="GO" id="GO:0004818">
    <property type="term" value="F:glutamate-tRNA ligase activity"/>
    <property type="evidence" value="ECO:0007669"/>
    <property type="project" value="UniProtKB-UniRule"/>
</dbReference>
<dbReference type="GO" id="GO:0000049">
    <property type="term" value="F:tRNA binding"/>
    <property type="evidence" value="ECO:0007669"/>
    <property type="project" value="InterPro"/>
</dbReference>
<dbReference type="GO" id="GO:0006424">
    <property type="term" value="P:glutamyl-tRNA aminoacylation"/>
    <property type="evidence" value="ECO:0007669"/>
    <property type="project" value="UniProtKB-UniRule"/>
</dbReference>
<dbReference type="Gene3D" id="1.10.10.350">
    <property type="match status" value="1"/>
</dbReference>
<dbReference type="Gene3D" id="3.40.50.620">
    <property type="entry name" value="HUPs"/>
    <property type="match status" value="1"/>
</dbReference>
<dbReference type="HAMAP" id="MF_00022">
    <property type="entry name" value="Glu_tRNA_synth_type1"/>
    <property type="match status" value="1"/>
</dbReference>
<dbReference type="InterPro" id="IPR045462">
    <property type="entry name" value="aa-tRNA-synth_I_cd-bd"/>
</dbReference>
<dbReference type="InterPro" id="IPR020751">
    <property type="entry name" value="aa-tRNA-synth_I_codon-bd_sub2"/>
</dbReference>
<dbReference type="InterPro" id="IPR001412">
    <property type="entry name" value="aa-tRNA-synth_I_CS"/>
</dbReference>
<dbReference type="InterPro" id="IPR008925">
    <property type="entry name" value="aa_tRNA-synth_I_cd-bd_sf"/>
</dbReference>
<dbReference type="InterPro" id="IPR004527">
    <property type="entry name" value="Glu-tRNA-ligase_bac/mito"/>
</dbReference>
<dbReference type="InterPro" id="IPR000924">
    <property type="entry name" value="Glu/Gln-tRNA-synth"/>
</dbReference>
<dbReference type="InterPro" id="IPR020058">
    <property type="entry name" value="Glu/Gln-tRNA-synth_Ib_cat-dom"/>
</dbReference>
<dbReference type="InterPro" id="IPR049940">
    <property type="entry name" value="GluQ/Sye"/>
</dbReference>
<dbReference type="InterPro" id="IPR014729">
    <property type="entry name" value="Rossmann-like_a/b/a_fold"/>
</dbReference>
<dbReference type="NCBIfam" id="TIGR00464">
    <property type="entry name" value="gltX_bact"/>
    <property type="match status" value="1"/>
</dbReference>
<dbReference type="PANTHER" id="PTHR43311">
    <property type="entry name" value="GLUTAMATE--TRNA LIGASE"/>
    <property type="match status" value="1"/>
</dbReference>
<dbReference type="PANTHER" id="PTHR43311:SF2">
    <property type="entry name" value="GLUTAMATE--TRNA LIGASE, MITOCHONDRIAL-RELATED"/>
    <property type="match status" value="1"/>
</dbReference>
<dbReference type="Pfam" id="PF19269">
    <property type="entry name" value="Anticodon_2"/>
    <property type="match status" value="1"/>
</dbReference>
<dbReference type="Pfam" id="PF00749">
    <property type="entry name" value="tRNA-synt_1c"/>
    <property type="match status" value="1"/>
</dbReference>
<dbReference type="PRINTS" id="PR00987">
    <property type="entry name" value="TRNASYNTHGLU"/>
</dbReference>
<dbReference type="SUPFAM" id="SSF48163">
    <property type="entry name" value="An anticodon-binding domain of class I aminoacyl-tRNA synthetases"/>
    <property type="match status" value="1"/>
</dbReference>
<dbReference type="SUPFAM" id="SSF52374">
    <property type="entry name" value="Nucleotidylyl transferase"/>
    <property type="match status" value="1"/>
</dbReference>
<dbReference type="PROSITE" id="PS00178">
    <property type="entry name" value="AA_TRNA_LIGASE_I"/>
    <property type="match status" value="1"/>
</dbReference>
<reference key="1">
    <citation type="journal article" date="2007" name="J. Bacteriol.">
        <title>The complete genome sequence of Campylobacter jejuni strain 81116 (NCTC11828).</title>
        <authorList>
            <person name="Pearson B.M."/>
            <person name="Gaskin D.J.H."/>
            <person name="Segers R.P.A.M."/>
            <person name="Wells J.M."/>
            <person name="Nuijten P.J.M."/>
            <person name="van Vliet A.H.M."/>
        </authorList>
    </citation>
    <scope>NUCLEOTIDE SEQUENCE [LARGE SCALE GENOMIC DNA]</scope>
    <source>
        <strain>81116 / NCTC 11828</strain>
    </source>
</reference>
<protein>
    <recommendedName>
        <fullName evidence="1">Glutamate--tRNA ligase 1</fullName>
        <ecNumber evidence="1">6.1.1.17</ecNumber>
    </recommendedName>
    <alternativeName>
        <fullName evidence="1">Glutamyl-tRNA synthetase 1</fullName>
        <shortName evidence="1">GluRS 1</shortName>
    </alternativeName>
</protein>
<proteinExistence type="inferred from homology"/>
<keyword id="KW-0030">Aminoacyl-tRNA synthetase</keyword>
<keyword id="KW-0067">ATP-binding</keyword>
<keyword id="KW-0963">Cytoplasm</keyword>
<keyword id="KW-0436">Ligase</keyword>
<keyword id="KW-0547">Nucleotide-binding</keyword>
<keyword id="KW-0648">Protein biosynthesis</keyword>